<accession>Q500Z7</accession>
<accession>Q9FM42</accession>
<protein>
    <recommendedName>
        <fullName evidence="5">SAGA-associated factor 29 homolog B</fullName>
        <shortName evidence="4">AtSGF29b</shortName>
    </recommendedName>
    <alternativeName>
        <fullName evidence="5">29 kDa SAGA-associated factor homolog B</fullName>
    </alternativeName>
</protein>
<reference key="1">
    <citation type="journal article" date="1998" name="DNA Res.">
        <title>Structural analysis of Arabidopsis thaliana chromosome 5. IV. Sequence features of the regions of 1,456,315 bp covered by nineteen physically assigned P1 and TAC clones.</title>
        <authorList>
            <person name="Sato S."/>
            <person name="Kaneko T."/>
            <person name="Kotani H."/>
            <person name="Nakamura Y."/>
            <person name="Asamizu E."/>
            <person name="Miyajima N."/>
            <person name="Tabata S."/>
        </authorList>
    </citation>
    <scope>NUCLEOTIDE SEQUENCE [LARGE SCALE GENOMIC DNA]</scope>
    <source>
        <strain>cv. Columbia</strain>
    </source>
</reference>
<reference key="2">
    <citation type="journal article" date="2017" name="Plant J.">
        <title>Araport11: a complete reannotation of the Arabidopsis thaliana reference genome.</title>
        <authorList>
            <person name="Cheng C.Y."/>
            <person name="Krishnakumar V."/>
            <person name="Chan A.P."/>
            <person name="Thibaud-Nissen F."/>
            <person name="Schobel S."/>
            <person name="Town C.D."/>
        </authorList>
    </citation>
    <scope>GENOME REANNOTATION</scope>
    <source>
        <strain>cv. Columbia</strain>
    </source>
</reference>
<reference key="3">
    <citation type="submission" date="2006-02" db="EMBL/GenBank/DDBJ databases">
        <title>Arabidopsis ORF clones.</title>
        <authorList>
            <person name="Shinn P."/>
            <person name="Chen H."/>
            <person name="Kim C.J."/>
            <person name="Ecker J.R."/>
        </authorList>
    </citation>
    <scope>NUCLEOTIDE SEQUENCE [LARGE SCALE MRNA]</scope>
    <source>
        <strain>cv. Columbia</strain>
    </source>
</reference>
<reference key="4">
    <citation type="submission" date="2006-07" db="EMBL/GenBank/DDBJ databases">
        <title>Large-scale analysis of RIKEN Arabidopsis full-length (RAFL) cDNAs.</title>
        <authorList>
            <person name="Totoki Y."/>
            <person name="Seki M."/>
            <person name="Ishida J."/>
            <person name="Nakajima M."/>
            <person name="Enju A."/>
            <person name="Kamiya A."/>
            <person name="Narusaka M."/>
            <person name="Shin-i T."/>
            <person name="Nakagawa M."/>
            <person name="Sakamoto N."/>
            <person name="Oishi K."/>
            <person name="Kohara Y."/>
            <person name="Kobayashi M."/>
            <person name="Toyoda A."/>
            <person name="Sakaki Y."/>
            <person name="Sakurai T."/>
            <person name="Iida K."/>
            <person name="Akiyama K."/>
            <person name="Satou M."/>
            <person name="Toyoda T."/>
            <person name="Konagaya A."/>
            <person name="Carninci P."/>
            <person name="Kawai J."/>
            <person name="Hayashizaki Y."/>
            <person name="Shinozaki K."/>
        </authorList>
    </citation>
    <scope>NUCLEOTIDE SEQUENCE [LARGE SCALE MRNA]</scope>
    <source>
        <strain>cv. Columbia</strain>
    </source>
</reference>
<reference key="5">
    <citation type="journal article" date="2011" name="Planta">
        <title>Arabidopsis thaliana transcriptional co-activators ADA2b and SGF29a are implicated in salt stress responses.</title>
        <authorList>
            <person name="Kaldis A."/>
            <person name="Tsementzi D."/>
            <person name="Tanriverdi O."/>
            <person name="Vlachonasios K.E."/>
        </authorList>
    </citation>
    <scope>TISSUE SPECIFICITY</scope>
</reference>
<organism>
    <name type="scientific">Arabidopsis thaliana</name>
    <name type="common">Mouse-ear cress</name>
    <dbReference type="NCBI Taxonomy" id="3702"/>
    <lineage>
        <taxon>Eukaryota</taxon>
        <taxon>Viridiplantae</taxon>
        <taxon>Streptophyta</taxon>
        <taxon>Embryophyta</taxon>
        <taxon>Tracheophyta</taxon>
        <taxon>Spermatophyta</taxon>
        <taxon>Magnoliopsida</taxon>
        <taxon>eudicotyledons</taxon>
        <taxon>Gunneridae</taxon>
        <taxon>Pentapetalae</taxon>
        <taxon>rosids</taxon>
        <taxon>malvids</taxon>
        <taxon>Brassicales</taxon>
        <taxon>Brassicaceae</taxon>
        <taxon>Camelineae</taxon>
        <taxon>Arabidopsis</taxon>
    </lineage>
</organism>
<name>SG29B_ARATH</name>
<feature type="chain" id="PRO_0000443330" description="SAGA-associated factor 29 homolog B">
    <location>
        <begin position="1"/>
        <end position="273"/>
    </location>
</feature>
<feature type="domain" description="SGF29 C-terminal" evidence="2">
    <location>
        <begin position="128"/>
        <end position="273"/>
    </location>
</feature>
<feature type="region of interest" description="Histone H3K4me3 N-terminus binding" evidence="2">
    <location>
        <begin position="171"/>
        <end position="173"/>
    </location>
</feature>
<feature type="region of interest" description="Histone H3K4me3 N-terminus binding" evidence="2">
    <location>
        <begin position="220"/>
        <end position="223"/>
    </location>
</feature>
<feature type="region of interest" description="Histone H3K4me3 binding" evidence="2">
    <location>
        <begin position="245"/>
        <end position="248"/>
    </location>
</feature>
<feature type="site" description="Histone H3K4me3 binding" evidence="2">
    <location>
        <position position="218"/>
    </location>
</feature>
<feature type="site" description="Histone H3K4me3 binding" evidence="2">
    <location>
        <position position="225"/>
    </location>
</feature>
<comment type="function">
    <text evidence="1">Chromatin reader component of the transcription regulatory histone acetylation (HAT) complex SAGA.</text>
</comment>
<comment type="subcellular location">
    <subcellularLocation>
        <location evidence="5">Nucleus</location>
    </subcellularLocation>
</comment>
<comment type="tissue specificity">
    <text evidence="3">Expressed in roots, rosette leaves, cauline leaves, stems and flowers.</text>
</comment>
<comment type="domain">
    <text evidence="2">The SGF29 tudor-like domain mediates binding to methylated 'Lys-4' of histone H3 (H3K4me).</text>
</comment>
<comment type="similarity">
    <text evidence="2">Belongs to the SGF29 family.</text>
</comment>
<comment type="sequence caution" evidence="5">
    <conflict type="erroneous gene model prediction">
        <sequence resource="EMBL-CDS" id="BAB08525"/>
    </conflict>
</comment>
<dbReference type="EMBL" id="AB009052">
    <property type="protein sequence ID" value="BAB08525.1"/>
    <property type="status" value="ALT_SEQ"/>
    <property type="molecule type" value="Genomic_DNA"/>
</dbReference>
<dbReference type="EMBL" id="CP002688">
    <property type="protein sequence ID" value="AED94562.1"/>
    <property type="molecule type" value="Genomic_DNA"/>
</dbReference>
<dbReference type="EMBL" id="BT022070">
    <property type="protein sequence ID" value="AAY27057.1"/>
    <property type="molecule type" value="mRNA"/>
</dbReference>
<dbReference type="EMBL" id="BT024494">
    <property type="protein sequence ID" value="ABD19675.1"/>
    <property type="molecule type" value="mRNA"/>
</dbReference>
<dbReference type="EMBL" id="AK229073">
    <property type="protein sequence ID" value="BAF00954.1"/>
    <property type="molecule type" value="mRNA"/>
</dbReference>
<dbReference type="RefSeq" id="NP_198871.2">
    <property type="nucleotide sequence ID" value="NM_123419.4"/>
</dbReference>
<dbReference type="SMR" id="Q500Z7"/>
<dbReference type="FunCoup" id="Q500Z7">
    <property type="interactions" value="1520"/>
</dbReference>
<dbReference type="STRING" id="3702.Q500Z7"/>
<dbReference type="iPTMnet" id="Q500Z7"/>
<dbReference type="PaxDb" id="3702-AT5G40550.1"/>
<dbReference type="EnsemblPlants" id="AT5G40550.1">
    <property type="protein sequence ID" value="AT5G40550.1"/>
    <property type="gene ID" value="AT5G40550"/>
</dbReference>
<dbReference type="GeneID" id="834053"/>
<dbReference type="Gramene" id="AT5G40550.1">
    <property type="protein sequence ID" value="AT5G40550.1"/>
    <property type="gene ID" value="AT5G40550"/>
</dbReference>
<dbReference type="KEGG" id="ath:AT5G40550"/>
<dbReference type="Araport" id="AT5G40550"/>
<dbReference type="TAIR" id="AT5G40550">
    <property type="gene designation" value="SGF29B"/>
</dbReference>
<dbReference type="eggNOG" id="KOG3038">
    <property type="taxonomic scope" value="Eukaryota"/>
</dbReference>
<dbReference type="HOGENOM" id="CLU_065257_0_0_1"/>
<dbReference type="InParanoid" id="Q500Z7"/>
<dbReference type="OMA" id="WRYIEAC"/>
<dbReference type="OrthoDB" id="10265994at2759"/>
<dbReference type="PhylomeDB" id="Q500Z7"/>
<dbReference type="PRO" id="PR:Q500Z7"/>
<dbReference type="Proteomes" id="UP000006548">
    <property type="component" value="Chromosome 5"/>
</dbReference>
<dbReference type="ExpressionAtlas" id="Q500Z7">
    <property type="expression patterns" value="baseline and differential"/>
</dbReference>
<dbReference type="GO" id="GO:0005634">
    <property type="term" value="C:nucleus"/>
    <property type="evidence" value="ECO:0007669"/>
    <property type="project" value="UniProtKB-SubCell"/>
</dbReference>
<dbReference type="GO" id="GO:0000124">
    <property type="term" value="C:SAGA complex"/>
    <property type="evidence" value="ECO:0007669"/>
    <property type="project" value="InterPro"/>
</dbReference>
<dbReference type="GO" id="GO:0006325">
    <property type="term" value="P:chromatin organization"/>
    <property type="evidence" value="ECO:0007669"/>
    <property type="project" value="UniProtKB-KW"/>
</dbReference>
<dbReference type="GO" id="GO:0009651">
    <property type="term" value="P:response to salt stress"/>
    <property type="evidence" value="ECO:0000315"/>
    <property type="project" value="TAIR"/>
</dbReference>
<dbReference type="CDD" id="cd20393">
    <property type="entry name" value="Tudor_SGF29_rpt1"/>
    <property type="match status" value="1"/>
</dbReference>
<dbReference type="CDD" id="cd20394">
    <property type="entry name" value="Tudor_SGF29_rpt2"/>
    <property type="match status" value="1"/>
</dbReference>
<dbReference type="FunFam" id="2.30.30.140:FF:000052">
    <property type="entry name" value="SAGA-associated factor 29 isoform X6"/>
    <property type="match status" value="1"/>
</dbReference>
<dbReference type="FunFam" id="2.30.30.140:FF:000061">
    <property type="entry name" value="SAGA-associated factor 29 isoform X6"/>
    <property type="match status" value="1"/>
</dbReference>
<dbReference type="Gene3D" id="2.30.30.140">
    <property type="match status" value="2"/>
</dbReference>
<dbReference type="InterPro" id="IPR037802">
    <property type="entry name" value="SGF29"/>
</dbReference>
<dbReference type="InterPro" id="IPR010750">
    <property type="entry name" value="SGF29_tudor-like_dom"/>
</dbReference>
<dbReference type="InterPro" id="IPR047288">
    <property type="entry name" value="Tudor_SGF29_rpt1"/>
</dbReference>
<dbReference type="InterPro" id="IPR047287">
    <property type="entry name" value="Tudor_SGF29_rpt2"/>
</dbReference>
<dbReference type="PANTHER" id="PTHR21539">
    <property type="entry name" value="SAGA-ASSOCIATED FACTOR 29"/>
    <property type="match status" value="1"/>
</dbReference>
<dbReference type="PANTHER" id="PTHR21539:SF0">
    <property type="entry name" value="SAGA-ASSOCIATED FACTOR 29"/>
    <property type="match status" value="1"/>
</dbReference>
<dbReference type="Pfam" id="PF07039">
    <property type="entry name" value="SGF29_Tudor"/>
    <property type="match status" value="1"/>
</dbReference>
<dbReference type="PROSITE" id="PS51518">
    <property type="entry name" value="SGF29_C"/>
    <property type="match status" value="1"/>
</dbReference>
<evidence type="ECO:0000250" key="1">
    <source>
        <dbReference type="UniProtKB" id="Q96ES7"/>
    </source>
</evidence>
<evidence type="ECO:0000255" key="2">
    <source>
        <dbReference type="PROSITE-ProRule" id="PRU00851"/>
    </source>
</evidence>
<evidence type="ECO:0000269" key="3">
    <source>
    </source>
</evidence>
<evidence type="ECO:0000303" key="4">
    <source>
    </source>
</evidence>
<evidence type="ECO:0000305" key="5"/>
<evidence type="ECO:0000312" key="6">
    <source>
        <dbReference type="Araport" id="AT5G40550"/>
    </source>
</evidence>
<evidence type="ECO:0000312" key="7">
    <source>
        <dbReference type="EMBL" id="BAB08525.1"/>
    </source>
</evidence>
<sequence length="273" mass="30885">MSSPDIVGILENTKELDRLRKDQEEVLVEINKMHKKLQASPEIVEKPGDISLAKLKNLYIQAKELSENEVTVSNILLTQLDLLLPYGPTGQQRRKLGVVAEGNDQKRKRMKVDSDVIRLSPSMRNQIEAYASLKGEQVAARVTAESADKDEWFVVKVIHFDRETKEVEVLDEEPGDDEEGSGQRTYKLPMLCILPFPKRNDPSNTQEFPPGKHVLAVYPGTTALYKATVVSTPRKRKSDEYLLEFDDDEEDGALPQRTVPFHKVVALPEGHRQ</sequence>
<keyword id="KW-0156">Chromatin regulator</keyword>
<keyword id="KW-0539">Nucleus</keyword>
<keyword id="KW-1185">Reference proteome</keyword>
<keyword id="KW-0804">Transcription</keyword>
<keyword id="KW-0805">Transcription regulation</keyword>
<proteinExistence type="evidence at transcript level"/>
<gene>
    <name evidence="4" type="primary">SGF29B</name>
    <name evidence="6" type="ordered locus">At5g40550</name>
    <name evidence="7" type="ORF">MNF13.7</name>
</gene>